<feature type="chain" id="PRO_0000217402" description="Uncharacterized protein ycf70">
    <location>
        <begin position="1"/>
        <end position="42"/>
    </location>
</feature>
<reference key="1">
    <citation type="submission" date="1999-05" db="EMBL/GenBank/DDBJ databases">
        <title>Molecular analysis of a 21.1-kb fragment of wheat chloroplast DNA bearing RNA polymerase subunit (rpo) genes.</title>
        <authorList>
            <person name="Matsuoka Y."/>
            <person name="Tsunewaki K."/>
            <person name="Ohnishi Y."/>
        </authorList>
    </citation>
    <scope>NUCLEOTIDE SEQUENCE [GENOMIC DNA]</scope>
    <source>
        <strain>cv. Chinese Spring</strain>
    </source>
</reference>
<keyword id="KW-0150">Chloroplast</keyword>
<keyword id="KW-0934">Plastid</keyword>
<keyword id="KW-1185">Reference proteome</keyword>
<accession>Q9XPS5</accession>
<dbReference type="EMBL" id="AB027572">
    <property type="protein sequence ID" value="BAA78037.1"/>
    <property type="molecule type" value="Genomic_DNA"/>
</dbReference>
<dbReference type="SMR" id="Q9XPS5"/>
<dbReference type="Proteomes" id="UP000019116">
    <property type="component" value="Unplaced"/>
</dbReference>
<dbReference type="GO" id="GO:0009507">
    <property type="term" value="C:chloroplast"/>
    <property type="evidence" value="ECO:0007669"/>
    <property type="project" value="UniProtKB-SubCell"/>
</dbReference>
<dbReference type="InterPro" id="IPR035337">
    <property type="entry name" value="Ycf70-like"/>
</dbReference>
<dbReference type="Pfam" id="PF17382">
    <property type="entry name" value="Ycf70"/>
    <property type="match status" value="1"/>
</dbReference>
<comment type="subcellular location">
    <subcellularLocation>
        <location>Plastid</location>
        <location>Chloroplast</location>
    </subcellularLocation>
</comment>
<comment type="similarity">
    <text evidence="1">Belongs to the ycf70 family.</text>
</comment>
<name>YCF70_WHEAT</name>
<proteinExistence type="inferred from homology"/>
<geneLocation type="chloroplast"/>
<gene>
    <name type="primary">ycf70</name>
</gene>
<organism>
    <name type="scientific">Triticum aestivum</name>
    <name type="common">Wheat</name>
    <dbReference type="NCBI Taxonomy" id="4565"/>
    <lineage>
        <taxon>Eukaryota</taxon>
        <taxon>Viridiplantae</taxon>
        <taxon>Streptophyta</taxon>
        <taxon>Embryophyta</taxon>
        <taxon>Tracheophyta</taxon>
        <taxon>Spermatophyta</taxon>
        <taxon>Magnoliopsida</taxon>
        <taxon>Liliopsida</taxon>
        <taxon>Poales</taxon>
        <taxon>Poaceae</taxon>
        <taxon>BOP clade</taxon>
        <taxon>Pooideae</taxon>
        <taxon>Triticodae</taxon>
        <taxon>Triticeae</taxon>
        <taxon>Triticinae</taxon>
        <taxon>Triticum</taxon>
    </lineage>
</organism>
<protein>
    <recommendedName>
        <fullName>Uncharacterized protein ycf70</fullName>
    </recommendedName>
    <alternativeName>
        <fullName>ORF42</fullName>
    </alternativeName>
</protein>
<sequence length="42" mass="5055">MALILYAIFYLFLVLLNFFHSFKQESNKLELSQWKKGERGKC</sequence>
<evidence type="ECO:0000305" key="1"/>